<protein>
    <recommendedName>
        <fullName>Mu-theraphotoxin-Hhn2o</fullName>
        <shortName>Mu-TRTX-Hhn2o</shortName>
    </recommendedName>
    <alternativeName>
        <fullName>Hainantoxin-III-7</fullName>
        <shortName>HNTX-III-7</shortName>
    </alternativeName>
</protein>
<evidence type="ECO:0000250" key="1"/>
<evidence type="ECO:0000255" key="2"/>
<evidence type="ECO:0000305" key="3"/>
<organism>
    <name type="scientific">Cyriopagopus hainanus</name>
    <name type="common">Chinese bird spider</name>
    <name type="synonym">Haplopelma hainanum</name>
    <dbReference type="NCBI Taxonomy" id="209901"/>
    <lineage>
        <taxon>Eukaryota</taxon>
        <taxon>Metazoa</taxon>
        <taxon>Ecdysozoa</taxon>
        <taxon>Arthropoda</taxon>
        <taxon>Chelicerata</taxon>
        <taxon>Arachnida</taxon>
        <taxon>Araneae</taxon>
        <taxon>Mygalomorphae</taxon>
        <taxon>Theraphosidae</taxon>
        <taxon>Haplopelma</taxon>
    </lineage>
</organism>
<accession>D2Y1Z0</accession>
<reference key="1">
    <citation type="journal article" date="2010" name="J. Proteome Res.">
        <title>Molecular diversification of peptide toxins from the tarantula Haplopelma hainanum (Ornithoctonus hainana) venom based on transcriptomic, peptidomic, and genomic analyses.</title>
        <authorList>
            <person name="Tang X."/>
            <person name="Zhang Y."/>
            <person name="Hu W."/>
            <person name="Xu D."/>
            <person name="Tao H."/>
            <person name="Yang X."/>
            <person name="Li Y."/>
            <person name="Jiang L."/>
            <person name="Liang S."/>
        </authorList>
    </citation>
    <scope>NUCLEOTIDE SEQUENCE [LARGE SCALE MRNA]</scope>
    <source>
        <tissue>Venom gland</tissue>
    </source>
</reference>
<feature type="signal peptide" evidence="2">
    <location>
        <begin position="1"/>
        <end position="21"/>
    </location>
</feature>
<feature type="propeptide" id="PRO_0000400546" evidence="1">
    <location>
        <begin position="22"/>
        <end position="48"/>
    </location>
</feature>
<feature type="peptide" id="PRO_0000400547" description="Mu-theraphotoxin-Hhn2o">
    <location>
        <begin position="49"/>
        <end position="81"/>
    </location>
</feature>
<feature type="modified residue" description="Leucine amide" evidence="1">
    <location>
        <position position="81"/>
    </location>
</feature>
<feature type="disulfide bond" evidence="1">
    <location>
        <begin position="50"/>
        <end position="65"/>
    </location>
</feature>
<feature type="disulfide bond" evidence="1">
    <location>
        <begin position="57"/>
        <end position="70"/>
    </location>
</feature>
<feature type="disulfide bond" evidence="1">
    <location>
        <begin position="64"/>
        <end position="77"/>
    </location>
</feature>
<dbReference type="EMBL" id="GU292867">
    <property type="protein sequence ID" value="ADB56683.1"/>
    <property type="molecule type" value="mRNA"/>
</dbReference>
<dbReference type="SMR" id="D2Y1Z0"/>
<dbReference type="ArachnoServer" id="AS001528">
    <property type="toxin name" value="mu-theraphotoxin-Hhn2o"/>
</dbReference>
<dbReference type="GO" id="GO:0005576">
    <property type="term" value="C:extracellular region"/>
    <property type="evidence" value="ECO:0007669"/>
    <property type="project" value="UniProtKB-SubCell"/>
</dbReference>
<dbReference type="GO" id="GO:0044231">
    <property type="term" value="C:host cell presynaptic membrane"/>
    <property type="evidence" value="ECO:0007669"/>
    <property type="project" value="UniProtKB-KW"/>
</dbReference>
<dbReference type="GO" id="GO:0008200">
    <property type="term" value="F:ion channel inhibitor activity"/>
    <property type="evidence" value="ECO:0007669"/>
    <property type="project" value="InterPro"/>
</dbReference>
<dbReference type="GO" id="GO:0017080">
    <property type="term" value="F:sodium channel regulator activity"/>
    <property type="evidence" value="ECO:0007669"/>
    <property type="project" value="UniProtKB-KW"/>
</dbReference>
<dbReference type="GO" id="GO:0090729">
    <property type="term" value="F:toxin activity"/>
    <property type="evidence" value="ECO:0007669"/>
    <property type="project" value="UniProtKB-KW"/>
</dbReference>
<dbReference type="InterPro" id="IPR011696">
    <property type="entry name" value="Huwentoxin-1"/>
</dbReference>
<dbReference type="InterPro" id="IPR013140">
    <property type="entry name" value="Huwentoxin_CS1"/>
</dbReference>
<dbReference type="Pfam" id="PF07740">
    <property type="entry name" value="Toxin_12"/>
    <property type="match status" value="1"/>
</dbReference>
<dbReference type="SUPFAM" id="SSF57059">
    <property type="entry name" value="omega toxin-like"/>
    <property type="match status" value="1"/>
</dbReference>
<dbReference type="PROSITE" id="PS60021">
    <property type="entry name" value="HWTX_1"/>
    <property type="match status" value="1"/>
</dbReference>
<keyword id="KW-0027">Amidation</keyword>
<keyword id="KW-1015">Disulfide bond</keyword>
<keyword id="KW-0872">Ion channel impairing toxin</keyword>
<keyword id="KW-0960">Knottin</keyword>
<keyword id="KW-0528">Neurotoxin</keyword>
<keyword id="KW-0638">Presynaptic neurotoxin</keyword>
<keyword id="KW-0964">Secreted</keyword>
<keyword id="KW-0732">Signal</keyword>
<keyword id="KW-0800">Toxin</keyword>
<keyword id="KW-0738">Voltage-gated sodium channel impairing toxin</keyword>
<comment type="function">
    <text evidence="1">Lethal neurotoxin. Selectively blocks tetrodotoxin-sensitive voltage-gated sodium channels (Nav). Does not affect tetrodotoxin-resistant voltage-gated sodium channels or calcium channels (By similarity).</text>
</comment>
<comment type="subunit">
    <text evidence="1">Monomer.</text>
</comment>
<comment type="subcellular location">
    <subcellularLocation>
        <location evidence="1">Secreted</location>
    </subcellularLocation>
</comment>
<comment type="tissue specificity">
    <text>Expressed by the venom gland.</text>
</comment>
<comment type="domain">
    <text evidence="1">The presence of a 'disulfide through disulfide knot' structurally defines this protein as a knottin.</text>
</comment>
<comment type="similarity">
    <text evidence="3">Belongs to the neurotoxin 10 (Hwtx-1) family. 15 (Hntx-3) subfamily.</text>
</comment>
<name>H3G01_CYRHA</name>
<proteinExistence type="evidence at transcript level"/>
<sequence length="83" mass="9109">MKASMFLALAGLVLLFVVGYASESEEKEFPIELLSKIFAVDVFKGEERGCKGFGDSCTPGKNECCPNHACSNKHKWCKAYLGK</sequence>